<gene>
    <name type="ORF">3x</name>
</gene>
<evidence type="ECO:0000305" key="1"/>
<dbReference type="EMBL" id="D13096">
    <property type="protein sequence ID" value="BAA02410.1"/>
    <property type="molecule type" value="Genomic_RNA"/>
</dbReference>
<dbReference type="PIR" id="JQ1721">
    <property type="entry name" value="JQ1721"/>
</dbReference>
<reference key="1">
    <citation type="journal article" date="1992" name="J. Gen. Virol.">
        <title>Analysis of a 9.6 kb sequence from the 3' end of canine coronavirus genomic RNA.</title>
        <authorList>
            <person name="Horsburgh B.C."/>
            <person name="Brierley I."/>
            <person name="Brown T.D.K."/>
        </authorList>
    </citation>
    <scope>NUCLEOTIDE SEQUENCE [GENOMIC RNA]</scope>
</reference>
<organismHost>
    <name type="scientific">Canis lupus familiaris</name>
    <name type="common">Dog</name>
    <name type="synonym">Canis familiaris</name>
    <dbReference type="NCBI Taxonomy" id="9615"/>
</organismHost>
<sequence>MLNLVSLLLKKSIVIQLFDITVYKFKAKFWYKLPFETRLRIIKHTKPKALSATKQVKRDYRKTAILNSMRK</sequence>
<protein>
    <recommendedName>
        <fullName>Non-structural protein 3x</fullName>
        <shortName>ns3x</shortName>
    </recommendedName>
    <alternativeName>
        <fullName>Accessory protein 3x</fullName>
    </alternativeName>
    <alternativeName>
        <fullName>ns3b</fullName>
    </alternativeName>
</protein>
<organism>
    <name type="scientific">Canine coronavirus (strain Insavc-1)</name>
    <name type="common">CCoV</name>
    <name type="synonym">Canine enteric coronavirus</name>
    <dbReference type="NCBI Taxonomy" id="36391"/>
    <lineage>
        <taxon>Viruses</taxon>
        <taxon>Riboviria</taxon>
        <taxon>Orthornavirae</taxon>
        <taxon>Pisuviricota</taxon>
        <taxon>Pisoniviricetes</taxon>
        <taxon>Nidovirales</taxon>
        <taxon>Cornidovirineae</taxon>
        <taxon>Coronaviridae</taxon>
        <taxon>Orthocoronavirinae</taxon>
        <taxon>Alphacoronavirus</taxon>
        <taxon>Tegacovirus</taxon>
        <taxon>Alphacoronavirus 1</taxon>
    </lineage>
</organism>
<accession>Q65983</accession>
<proteinExistence type="predicted"/>
<comment type="caution">
    <text evidence="1">Canine coronavirus genome contains both a truncated ns3b protein and a ns3x protein. Since it is not clear if the ns3b locus is expressed, the ns3x protein is sometimes described as ns3b.</text>
</comment>
<feature type="chain" id="PRO_0000291767" description="Non-structural protein 3x">
    <location>
        <begin position="1"/>
        <end position="71"/>
    </location>
</feature>
<name>NS3X_CVCAI</name>